<gene>
    <name evidence="2" type="primary">Stab2</name>
    <name type="synonym">Feel2</name>
    <name evidence="12" type="synonym">Hare</name>
</gene>
<organism>
    <name type="scientific">Rattus norvegicus</name>
    <name type="common">Rat</name>
    <dbReference type="NCBI Taxonomy" id="10116"/>
    <lineage>
        <taxon>Eukaryota</taxon>
        <taxon>Metazoa</taxon>
        <taxon>Chordata</taxon>
        <taxon>Craniata</taxon>
        <taxon>Vertebrata</taxon>
        <taxon>Euteleostomi</taxon>
        <taxon>Mammalia</taxon>
        <taxon>Eutheria</taxon>
        <taxon>Euarchontoglires</taxon>
        <taxon>Glires</taxon>
        <taxon>Rodentia</taxon>
        <taxon>Myomorpha</taxon>
        <taxon>Muroidea</taxon>
        <taxon>Muridae</taxon>
        <taxon>Murinae</taxon>
        <taxon>Rattus</taxon>
    </lineage>
</organism>
<comment type="function">
    <text evidence="7 8 10 11">Phosphatidylserine receptor that enhances the engulfment of apoptotic cells. Hyaluronan receptor that binds to and mediates endocytosis of hyaluronic acid (HA). Also acts, in different species, as a primary systemic scavenger receptor for heparin (Hep), chondroitin sulfate (CS), dermatan sulfate (DS), nonglycosaminoglycan (GAG), acetylated low-density lipoprotein (AcLDL), pro-collagen propeptides and advanced glycation end products (AGE). May serve to maintain tissue integrity by supporting extracellular matrix turnover or it may contribute to maintaining fluidity of bodily liquids by resorption of hyaluronan. Counter receptor which plays an important role in lymphocyte recruitment in the hepatic vasculature. Binds to both Gram-positive and Gram-negative bacteria and may play a role in defense against bacterial infection. The proteolytically processed 175 kDa form also functions as an endocytosis receptor for heparin internalization as well as HA and CS.</text>
</comment>
<comment type="subunit">
    <text evidence="1">Interacts with GULP1, heparin, alpha-M/beta-2 integrin (ITGAM and ITGB2), and thymosin beta 4 (TMSB4X).</text>
</comment>
<comment type="subcellular location">
    <subcellularLocation>
        <location evidence="2">Cytoplasm</location>
    </subcellularLocation>
    <subcellularLocation>
        <location evidence="8">Cell membrane</location>
        <topology evidence="8">Single-pass type I membrane protein</topology>
    </subcellularLocation>
</comment>
<comment type="tissue specificity">
    <text evidence="9">Initially expressed in all vascular cells, including those of sinusoidal-like structures, vitellin veins, and hepatic veins or sinus venosus, in E13.5 fetal liver. The expression then progressively disappears in the portal and hepatic veins, but the expression in sinusoidals endothelial cells (SECs) is retained and becomes stronger during development.</text>
</comment>
<comment type="domain">
    <text>Recognizes phosphatidyl serine via its epidermal growth factor-like domains.</text>
</comment>
<comment type="PTM">
    <text>Glycosylated.</text>
</comment>
<comment type="PTM">
    <text evidence="7">Proteolytically processed to yield a 175 kDa protein.</text>
</comment>
<feature type="chain" id="PRO_0000007716" description="Stabilin-2">
    <location>
        <begin position="1" status="less than"/>
        <end position="1431"/>
    </location>
</feature>
<feature type="chain" id="PRO_0000007717" description="175 kDa stabilin-2">
    <location>
        <begin position="1"/>
        <end position="1431"/>
    </location>
</feature>
<feature type="topological domain" description="Extracellular" evidence="3">
    <location>
        <begin position="1" status="less than"/>
        <end position="1322"/>
    </location>
</feature>
<feature type="transmembrane region" description="Helical" evidence="3">
    <location>
        <begin position="1323"/>
        <end position="1343"/>
    </location>
</feature>
<feature type="topological domain" description="Cytoplasmic" evidence="3">
    <location>
        <begin position="1344"/>
        <end position="1431"/>
    </location>
</feature>
<feature type="domain" description="FAS1" evidence="5">
    <location>
        <begin position="2"/>
        <end position="130"/>
    </location>
</feature>
<feature type="domain" description="Laminin EGF-like 1" evidence="3">
    <location>
        <begin position="207"/>
        <end position="272"/>
    </location>
</feature>
<feature type="domain" description="EGF-like 1" evidence="4">
    <location>
        <begin position="296"/>
        <end position="334"/>
    </location>
</feature>
<feature type="domain" description="EGF-like 2" evidence="4">
    <location>
        <begin position="335"/>
        <end position="376"/>
    </location>
</feature>
<feature type="domain" description="EGF-like 3" evidence="4">
    <location>
        <begin position="377"/>
        <end position="418"/>
    </location>
</feature>
<feature type="domain" description="EGF-like 4" evidence="4">
    <location>
        <begin position="419"/>
        <end position="460"/>
    </location>
</feature>
<feature type="domain" description="FAS1 2" evidence="5">
    <location>
        <begin position="460"/>
        <end position="588"/>
    </location>
</feature>
<feature type="domain" description="FAS1 3" evidence="5">
    <location>
        <begin position="604"/>
        <end position="745"/>
    </location>
</feature>
<feature type="domain" description="Laminin EGF-like 2" evidence="3">
    <location>
        <begin position="822"/>
        <end position="887"/>
    </location>
</feature>
<feature type="domain" description="EGF-like 5" evidence="4">
    <location>
        <begin position="947"/>
        <end position="987"/>
    </location>
</feature>
<feature type="domain" description="EGF-like 6" evidence="4">
    <location>
        <begin position="988"/>
        <end position="1030"/>
    </location>
</feature>
<feature type="domain" description="Link" evidence="6">
    <location>
        <begin position="1063"/>
        <end position="1156"/>
    </location>
</feature>
<feature type="domain" description="FAS1 4" evidence="5">
    <location>
        <begin position="1176"/>
        <end position="1310"/>
    </location>
</feature>
<feature type="region of interest" description="Interaction with TMSB4X" evidence="1">
    <location>
        <begin position="1368"/>
        <end position="1378"/>
    </location>
</feature>
<feature type="glycosylation site" description="N-linked (GlcNAc...) asparagine" evidence="3">
    <location>
        <position position="112"/>
    </location>
</feature>
<feature type="glycosylation site" description="N-linked (GlcNAc...) asparagine" evidence="3">
    <location>
        <position position="140"/>
    </location>
</feature>
<feature type="glycosylation site" description="N-linked (GlcNAc...) asparagine" evidence="3">
    <location>
        <position position="231"/>
    </location>
</feature>
<feature type="glycosylation site" description="N-linked (GlcNAc...) asparagine" evidence="3">
    <location>
        <position position="243"/>
    </location>
</feature>
<feature type="glycosylation site" description="N-linked (GlcNAc...) asparagine" evidence="3">
    <location>
        <position position="301"/>
    </location>
</feature>
<feature type="glycosylation site" description="N-linked (GlcNAc...) asparagine" evidence="3">
    <location>
        <position position="329"/>
    </location>
</feature>
<feature type="glycosylation site" description="N-linked (GlcNAc...) asparagine" evidence="3">
    <location>
        <position position="437"/>
    </location>
</feature>
<feature type="glycosylation site" description="N-linked (GlcNAc...) asparagine" evidence="3">
    <location>
        <position position="607"/>
    </location>
</feature>
<feature type="glycosylation site" description="N-linked (GlcNAc...) asparagine" evidence="3">
    <location>
        <position position="858"/>
    </location>
</feature>
<feature type="glycosylation site" description="N-linked (GlcNAc...) asparagine" evidence="3">
    <location>
        <position position="929"/>
    </location>
</feature>
<feature type="glycosylation site" description="N-linked (GlcNAc...) asparagine" evidence="3">
    <location>
        <position position="1145"/>
    </location>
</feature>
<feature type="glycosylation site" description="N-linked (GlcNAc...) asparagine" evidence="3">
    <location>
        <position position="1161"/>
    </location>
</feature>
<feature type="glycosylation site" description="N-linked (GlcNAc...) asparagine" evidence="3">
    <location>
        <position position="1233"/>
    </location>
</feature>
<feature type="glycosylation site" description="N-linked (GlcNAc...) asparagine" evidence="3">
    <location>
        <position position="1249"/>
    </location>
</feature>
<feature type="glycosylation site" description="N-linked (GlcNAc...) asparagine" evidence="3">
    <location>
        <position position="1258"/>
    </location>
</feature>
<feature type="disulfide bond" evidence="1">
    <location>
        <begin position="212"/>
        <end position="226"/>
    </location>
</feature>
<feature type="disulfide bond" evidence="1">
    <location>
        <begin position="220"/>
        <end position="236"/>
    </location>
</feature>
<feature type="disulfide bond" evidence="1">
    <location>
        <begin position="238"/>
        <end position="247"/>
    </location>
</feature>
<feature type="disulfide bond" evidence="1">
    <location>
        <begin position="259"/>
        <end position="270"/>
    </location>
</feature>
<feature type="disulfide bond" evidence="1">
    <location>
        <begin position="263"/>
        <end position="280"/>
    </location>
</feature>
<feature type="disulfide bond" evidence="1">
    <location>
        <begin position="282"/>
        <end position="291"/>
    </location>
</feature>
<feature type="disulfide bond" evidence="1">
    <location>
        <begin position="300"/>
        <end position="310"/>
    </location>
</feature>
<feature type="disulfide bond" evidence="1">
    <location>
        <begin position="304"/>
        <end position="320"/>
    </location>
</feature>
<feature type="disulfide bond" evidence="1">
    <location>
        <begin position="322"/>
        <end position="333"/>
    </location>
</feature>
<feature type="disulfide bond" evidence="1">
    <location>
        <begin position="339"/>
        <end position="352"/>
    </location>
</feature>
<feature type="disulfide bond" evidence="1">
    <location>
        <begin position="346"/>
        <end position="362"/>
    </location>
</feature>
<feature type="disulfide bond" evidence="1">
    <location>
        <begin position="364"/>
        <end position="375"/>
    </location>
</feature>
<feature type="disulfide bond" evidence="1">
    <location>
        <begin position="381"/>
        <end position="394"/>
    </location>
</feature>
<feature type="disulfide bond" evidence="1">
    <location>
        <begin position="388"/>
        <end position="404"/>
    </location>
</feature>
<feature type="disulfide bond" evidence="1">
    <location>
        <begin position="406"/>
        <end position="417"/>
    </location>
</feature>
<feature type="disulfide bond" evidence="1">
    <location>
        <begin position="423"/>
        <end position="436"/>
    </location>
</feature>
<feature type="disulfide bond" evidence="1">
    <location>
        <begin position="430"/>
        <end position="446"/>
    </location>
</feature>
<feature type="disulfide bond" evidence="1">
    <location>
        <begin position="448"/>
        <end position="459"/>
    </location>
</feature>
<feature type="disulfide bond" evidence="1">
    <location>
        <begin position="827"/>
        <end position="841"/>
    </location>
</feature>
<feature type="disulfide bond" evidence="1">
    <location>
        <begin position="835"/>
        <end position="851"/>
    </location>
</feature>
<feature type="disulfide bond" evidence="1">
    <location>
        <begin position="853"/>
        <end position="862"/>
    </location>
</feature>
<feature type="disulfide bond" evidence="1">
    <location>
        <begin position="874"/>
        <end position="885"/>
    </location>
</feature>
<feature type="disulfide bond" evidence="1">
    <location>
        <begin position="879"/>
        <end position="895"/>
    </location>
</feature>
<feature type="disulfide bond" evidence="1">
    <location>
        <begin position="897"/>
        <end position="906"/>
    </location>
</feature>
<feature type="disulfide bond" evidence="1">
    <location>
        <begin position="951"/>
        <end position="964"/>
    </location>
</feature>
<feature type="disulfide bond" evidence="1">
    <location>
        <begin position="958"/>
        <end position="973"/>
    </location>
</feature>
<feature type="disulfide bond" evidence="1">
    <location>
        <begin position="975"/>
        <end position="986"/>
    </location>
</feature>
<feature type="disulfide bond" evidence="1">
    <location>
        <begin position="992"/>
        <end position="1006"/>
    </location>
</feature>
<feature type="disulfide bond" evidence="1">
    <location>
        <begin position="1000"/>
        <end position="1016"/>
    </location>
</feature>
<feature type="disulfide bond" evidence="1">
    <location>
        <begin position="1018"/>
        <end position="1029"/>
    </location>
</feature>
<feature type="disulfide bond" evidence="1">
    <location>
        <begin position="1085"/>
        <end position="1154"/>
    </location>
</feature>
<feature type="disulfide bond" evidence="1">
    <location>
        <begin position="1109"/>
        <end position="1130"/>
    </location>
</feature>
<feature type="non-terminal residue" evidence="14">
    <location>
        <position position="1"/>
    </location>
</feature>
<protein>
    <recommendedName>
        <fullName>Stabilin-2</fullName>
    </recommendedName>
    <alternativeName>
        <fullName>Fasciclin, EGF-like, laminin-type EGF-like and link domain-containing scavenger receptor 2</fullName>
        <shortName>FEEL-2</shortName>
    </alternativeName>
    <alternativeName>
        <fullName>Hyaluronan receptor for endocytosis</fullName>
    </alternativeName>
    <component>
        <recommendedName>
            <fullName>175 kDa stabilin-2</fullName>
        </recommendedName>
        <alternativeName>
            <fullName>175 kDa hyaluronan receptor for endocytosis</fullName>
        </alternativeName>
    </component>
</protein>
<accession>Q8CFM6</accession>
<keyword id="KW-1003">Cell membrane</keyword>
<keyword id="KW-0963">Cytoplasm</keyword>
<keyword id="KW-0903">Direct protein sequencing</keyword>
<keyword id="KW-1015">Disulfide bond</keyword>
<keyword id="KW-0245">EGF-like domain</keyword>
<keyword id="KW-0254">Endocytosis</keyword>
<keyword id="KW-0325">Glycoprotein</keyword>
<keyword id="KW-0373">Hyaluronic acid</keyword>
<keyword id="KW-0424">Laminin EGF-like domain</keyword>
<keyword id="KW-0472">Membrane</keyword>
<keyword id="KW-0675">Receptor</keyword>
<keyword id="KW-1185">Reference proteome</keyword>
<keyword id="KW-0677">Repeat</keyword>
<keyword id="KW-0812">Transmembrane</keyword>
<keyword id="KW-1133">Transmembrane helix</keyword>
<reference evidence="13 14" key="1">
    <citation type="journal article" date="2002" name="Mol. Biol. Cell">
        <title>Molecular cloning and functional expression of the rat 175-kDa hyaluronan receptor for endocytosis.</title>
        <authorList>
            <person name="Zhou B."/>
            <person name="Weigel J.A."/>
            <person name="Saxena A."/>
            <person name="Weigel P.H."/>
        </authorList>
    </citation>
    <scope>NUCLEOTIDE SEQUENCE [MRNA]</scope>
    <scope>PROTEIN SEQUENCE OF 1-18; 62-73; 103-120; 122-136; 488-509; 604-619; 651-668; 1070-1075 AND 1120-1129</scope>
    <scope>FUNCTION</scope>
    <source>
        <strain evidence="14">Sprague-Dawley</strain>
        <tissue>Endothelial cell</tissue>
    </source>
</reference>
<reference key="2">
    <citation type="journal article" date="1997" name="Glycobiology">
        <title>Identification of a 175 kDa protein as the ligand-binding subunit of the rat liver sinusoidal endothelial cell hyaluronan receptor.</title>
        <authorList>
            <person name="Yannariello-Brown J."/>
            <person name="Zhou B."/>
            <person name="Weigel P.H."/>
        </authorList>
    </citation>
    <scope>FUNCTION</scope>
</reference>
<reference key="3">
    <citation type="journal article" date="2005" name="Exp. Cell Res.">
        <title>Stabilin-1 and stabilin-2 are both directed into the early endocytic pathway in hepatic sinusoidal endothelium via interactions with clathrin/AP-2, independent of ligand binding.</title>
        <authorList>
            <person name="Hansen B."/>
            <person name="Longati P."/>
            <person name="Elvevold K."/>
            <person name="Nedredal G.-I."/>
            <person name="Schledzewski K."/>
            <person name="Olsen R."/>
            <person name="Falkowski M."/>
            <person name="Kzhyshkowska J."/>
            <person name="Carlsson F."/>
            <person name="Johansson S."/>
            <person name="Smedsroed B."/>
            <person name="Goerdt S."/>
            <person name="Johansson S."/>
            <person name="McCourt P."/>
        </authorList>
    </citation>
    <scope>FUNCTION</scope>
    <scope>SUBCELLULAR LOCATION</scope>
</reference>
<reference key="4">
    <citation type="journal article" date="2007" name="Cell Tissue Res.">
        <title>Involvement of signaling of VEGF and TGF-beta in differentiation of sinusoidal endothelial cells during culture of fetal rat liver cells.</title>
        <authorList>
            <person name="Yoshida M."/>
            <person name="Nishikawa Y."/>
            <person name="Omori Y."/>
            <person name="Yoshioka T."/>
            <person name="Tokairin T."/>
            <person name="McCourt P."/>
            <person name="Enomoto K."/>
        </authorList>
    </citation>
    <scope>TISSUE SPECIFICITY</scope>
</reference>
<reference key="5">
    <citation type="journal article" date="2009" name="Am. J. Physiol.">
        <title>Rat and human HARE/stabilin-2 are clearance receptors for high- and low-molecular-weight heparins.</title>
        <authorList>
            <person name="Harris E.N."/>
            <person name="Baggenstoss B.A."/>
            <person name="Weigel P.H."/>
        </authorList>
    </citation>
    <scope>FUNCTION</scope>
</reference>
<dbReference type="EMBL" id="AY007370">
    <property type="protein sequence ID" value="AAG13634.1"/>
    <property type="molecule type" value="mRNA"/>
</dbReference>
<dbReference type="SMR" id="Q8CFM6"/>
<dbReference type="FunCoup" id="Q8CFM6">
    <property type="interactions" value="38"/>
</dbReference>
<dbReference type="STRING" id="10116.ENSRNOP00000056294"/>
<dbReference type="GlyCosmos" id="Q8CFM6">
    <property type="glycosylation" value="15 sites, No reported glycans"/>
</dbReference>
<dbReference type="GlyGen" id="Q8CFM6">
    <property type="glycosylation" value="16 sites"/>
</dbReference>
<dbReference type="PhosphoSitePlus" id="Q8CFM6"/>
<dbReference type="UCSC" id="RGD:628822">
    <property type="organism name" value="rat"/>
</dbReference>
<dbReference type="AGR" id="RGD:628822"/>
<dbReference type="RGD" id="628822">
    <property type="gene designation" value="Stab2"/>
</dbReference>
<dbReference type="eggNOG" id="KOG1218">
    <property type="taxonomic scope" value="Eukaryota"/>
</dbReference>
<dbReference type="InParanoid" id="Q8CFM6"/>
<dbReference type="PhylomeDB" id="Q8CFM6"/>
<dbReference type="Proteomes" id="UP000002494">
    <property type="component" value="Unplaced"/>
</dbReference>
<dbReference type="GO" id="GO:0005737">
    <property type="term" value="C:cytoplasm"/>
    <property type="evidence" value="ECO:0007669"/>
    <property type="project" value="UniProtKB-SubCell"/>
</dbReference>
<dbReference type="GO" id="GO:0009897">
    <property type="term" value="C:external side of plasma membrane"/>
    <property type="evidence" value="ECO:0000314"/>
    <property type="project" value="UniProtKB"/>
</dbReference>
<dbReference type="GO" id="GO:0005886">
    <property type="term" value="C:plasma membrane"/>
    <property type="evidence" value="ECO:0000266"/>
    <property type="project" value="RGD"/>
</dbReference>
<dbReference type="GO" id="GO:0005509">
    <property type="term" value="F:calcium ion binding"/>
    <property type="evidence" value="ECO:0007669"/>
    <property type="project" value="InterPro"/>
</dbReference>
<dbReference type="GO" id="GO:0038024">
    <property type="term" value="F:cargo receptor activity"/>
    <property type="evidence" value="ECO:0000266"/>
    <property type="project" value="RGD"/>
</dbReference>
<dbReference type="GO" id="GO:0005540">
    <property type="term" value="F:hyaluronic acid binding"/>
    <property type="evidence" value="ECO:0000314"/>
    <property type="project" value="UniProtKB"/>
</dbReference>
<dbReference type="GO" id="GO:0030169">
    <property type="term" value="F:low-density lipoprotein particle binding"/>
    <property type="evidence" value="ECO:0000266"/>
    <property type="project" value="RGD"/>
</dbReference>
<dbReference type="GO" id="GO:0005041">
    <property type="term" value="F:low-density lipoprotein particle receptor activity"/>
    <property type="evidence" value="ECO:0000266"/>
    <property type="project" value="RGD"/>
</dbReference>
<dbReference type="GO" id="GO:0005044">
    <property type="term" value="F:scavenger receptor activity"/>
    <property type="evidence" value="ECO:0000266"/>
    <property type="project" value="RGD"/>
</dbReference>
<dbReference type="GO" id="GO:0007155">
    <property type="term" value="P:cell adhesion"/>
    <property type="evidence" value="ECO:0007669"/>
    <property type="project" value="InterPro"/>
</dbReference>
<dbReference type="GO" id="GO:0042742">
    <property type="term" value="P:defense response to bacterium"/>
    <property type="evidence" value="ECO:0000266"/>
    <property type="project" value="RGD"/>
</dbReference>
<dbReference type="GO" id="GO:0050830">
    <property type="term" value="P:defense response to Gram-positive bacterium"/>
    <property type="evidence" value="ECO:0000250"/>
    <property type="project" value="UniProtKB"/>
</dbReference>
<dbReference type="GO" id="GO:0006897">
    <property type="term" value="P:endocytosis"/>
    <property type="evidence" value="ECO:0000314"/>
    <property type="project" value="UniProtKB"/>
</dbReference>
<dbReference type="GO" id="GO:0030214">
    <property type="term" value="P:hyaluronan catabolic process"/>
    <property type="evidence" value="ECO:0000266"/>
    <property type="project" value="RGD"/>
</dbReference>
<dbReference type="GO" id="GO:0006898">
    <property type="term" value="P:receptor-mediated endocytosis"/>
    <property type="evidence" value="ECO:0000266"/>
    <property type="project" value="RGD"/>
</dbReference>
<dbReference type="FunFam" id="3.10.100.10:FF:000001">
    <property type="entry name" value="Hyaluronan proteoglycan link protein 1"/>
    <property type="match status" value="1"/>
</dbReference>
<dbReference type="FunFam" id="2.10.25.10:FF:000040">
    <property type="entry name" value="Stabilin 2"/>
    <property type="match status" value="3"/>
</dbReference>
<dbReference type="FunFam" id="2.10.25.10:FF:000278">
    <property type="entry name" value="Stabilin 2"/>
    <property type="match status" value="1"/>
</dbReference>
<dbReference type="FunFam" id="2.10.25.10:FF:000470">
    <property type="entry name" value="Stabilin 2"/>
    <property type="match status" value="1"/>
</dbReference>
<dbReference type="FunFam" id="2.10.25.10:FF:000497">
    <property type="entry name" value="Stabilin 2"/>
    <property type="match status" value="1"/>
</dbReference>
<dbReference type="FunFam" id="2.30.180.10:FF:000005">
    <property type="entry name" value="Stabilin 2"/>
    <property type="match status" value="2"/>
</dbReference>
<dbReference type="FunFam" id="2.30.180.10:FF:000018">
    <property type="entry name" value="Stabilin 2"/>
    <property type="match status" value="1"/>
</dbReference>
<dbReference type="FunFam" id="2.30.180.10:FF:000020">
    <property type="entry name" value="Stabilin 2"/>
    <property type="match status" value="1"/>
</dbReference>
<dbReference type="Gene3D" id="2.30.180.10">
    <property type="entry name" value="FAS1 domain"/>
    <property type="match status" value="4"/>
</dbReference>
<dbReference type="Gene3D" id="2.10.25.10">
    <property type="entry name" value="Laminin"/>
    <property type="match status" value="7"/>
</dbReference>
<dbReference type="Gene3D" id="3.10.100.10">
    <property type="entry name" value="Mannose-Binding Protein A, subunit A"/>
    <property type="match status" value="1"/>
</dbReference>
<dbReference type="Gene3D" id="2.170.300.10">
    <property type="entry name" value="Tie2 ligand-binding domain superfamily"/>
    <property type="match status" value="1"/>
</dbReference>
<dbReference type="InterPro" id="IPR016186">
    <property type="entry name" value="C-type_lectin-like/link_sf"/>
</dbReference>
<dbReference type="InterPro" id="IPR016187">
    <property type="entry name" value="CTDL_fold"/>
</dbReference>
<dbReference type="InterPro" id="IPR001881">
    <property type="entry name" value="EGF-like_Ca-bd_dom"/>
</dbReference>
<dbReference type="InterPro" id="IPR000742">
    <property type="entry name" value="EGF-like_dom"/>
</dbReference>
<dbReference type="InterPro" id="IPR024731">
    <property type="entry name" value="EGF_dom"/>
</dbReference>
<dbReference type="InterPro" id="IPR036378">
    <property type="entry name" value="FAS1_dom_sf"/>
</dbReference>
<dbReference type="InterPro" id="IPR000782">
    <property type="entry name" value="FAS1_domain"/>
</dbReference>
<dbReference type="InterPro" id="IPR009030">
    <property type="entry name" value="Growth_fac_rcpt_cys_sf"/>
</dbReference>
<dbReference type="InterPro" id="IPR002049">
    <property type="entry name" value="LE_dom"/>
</dbReference>
<dbReference type="InterPro" id="IPR000538">
    <property type="entry name" value="Link_dom"/>
</dbReference>
<dbReference type="PANTHER" id="PTHR24038">
    <property type="entry name" value="STABILIN"/>
    <property type="match status" value="1"/>
</dbReference>
<dbReference type="PANTHER" id="PTHR24038:SF0">
    <property type="entry name" value="STABILIN-2"/>
    <property type="match status" value="1"/>
</dbReference>
<dbReference type="Pfam" id="PF12947">
    <property type="entry name" value="EGF_3"/>
    <property type="match status" value="5"/>
</dbReference>
<dbReference type="Pfam" id="PF02469">
    <property type="entry name" value="Fasciclin"/>
    <property type="match status" value="3"/>
</dbReference>
<dbReference type="Pfam" id="PF00193">
    <property type="entry name" value="Xlink"/>
    <property type="match status" value="1"/>
</dbReference>
<dbReference type="SMART" id="SM00181">
    <property type="entry name" value="EGF"/>
    <property type="match status" value="11"/>
</dbReference>
<dbReference type="SMART" id="SM00179">
    <property type="entry name" value="EGF_CA"/>
    <property type="match status" value="2"/>
</dbReference>
<dbReference type="SMART" id="SM00554">
    <property type="entry name" value="FAS1"/>
    <property type="match status" value="4"/>
</dbReference>
<dbReference type="SMART" id="SM00445">
    <property type="entry name" value="LINK"/>
    <property type="match status" value="1"/>
</dbReference>
<dbReference type="SUPFAM" id="SSF56436">
    <property type="entry name" value="C-type lectin-like"/>
    <property type="match status" value="1"/>
</dbReference>
<dbReference type="SUPFAM" id="SSF57196">
    <property type="entry name" value="EGF/Laminin"/>
    <property type="match status" value="3"/>
</dbReference>
<dbReference type="SUPFAM" id="SSF82153">
    <property type="entry name" value="FAS1 domain"/>
    <property type="match status" value="4"/>
</dbReference>
<dbReference type="SUPFAM" id="SSF57184">
    <property type="entry name" value="Growth factor receptor domain"/>
    <property type="match status" value="1"/>
</dbReference>
<dbReference type="PROSITE" id="PS00022">
    <property type="entry name" value="EGF_1"/>
    <property type="match status" value="3"/>
</dbReference>
<dbReference type="PROSITE" id="PS01186">
    <property type="entry name" value="EGF_2"/>
    <property type="match status" value="8"/>
</dbReference>
<dbReference type="PROSITE" id="PS50026">
    <property type="entry name" value="EGF_3"/>
    <property type="match status" value="10"/>
</dbReference>
<dbReference type="PROSITE" id="PS01248">
    <property type="entry name" value="EGF_LAM_1"/>
    <property type="match status" value="2"/>
</dbReference>
<dbReference type="PROSITE" id="PS50213">
    <property type="entry name" value="FAS1"/>
    <property type="match status" value="4"/>
</dbReference>
<dbReference type="PROSITE" id="PS01241">
    <property type="entry name" value="LINK_1"/>
    <property type="match status" value="1"/>
</dbReference>
<dbReference type="PROSITE" id="PS50963">
    <property type="entry name" value="LINK_2"/>
    <property type="match status" value="1"/>
</dbReference>
<name>STAB2_RAT</name>
<evidence type="ECO:0000250" key="1"/>
<evidence type="ECO:0000250" key="2">
    <source>
        <dbReference type="UniProtKB" id="Q8WWQ8"/>
    </source>
</evidence>
<evidence type="ECO:0000255" key="3"/>
<evidence type="ECO:0000255" key="4">
    <source>
        <dbReference type="PROSITE-ProRule" id="PRU00076"/>
    </source>
</evidence>
<evidence type="ECO:0000255" key="5">
    <source>
        <dbReference type="PROSITE-ProRule" id="PRU00082"/>
    </source>
</evidence>
<evidence type="ECO:0000255" key="6">
    <source>
        <dbReference type="PROSITE-ProRule" id="PRU00323"/>
    </source>
</evidence>
<evidence type="ECO:0000269" key="7">
    <source>
    </source>
</evidence>
<evidence type="ECO:0000269" key="8">
    <source>
    </source>
</evidence>
<evidence type="ECO:0000269" key="9">
    <source>
    </source>
</evidence>
<evidence type="ECO:0000269" key="10">
    <source>
    </source>
</evidence>
<evidence type="ECO:0000269" key="11">
    <source>
    </source>
</evidence>
<evidence type="ECO:0000303" key="12">
    <source>
    </source>
</evidence>
<evidence type="ECO:0000305" key="13"/>
<evidence type="ECO:0000312" key="14">
    <source>
        <dbReference type="EMBL" id="AAG13634.1"/>
    </source>
</evidence>
<sequence>SLPSLLTRLEQMPDYSIFRGYIIHYNLASAIESADAYTVFVPNNEAIENYIREKKATSLKEDILRYHVVLGEKLLKNDLHNGMHRETMLGFSYLLAFFLRNDQLYVNEAPINYTNVATDKGVIHGLEKVLEIQKNRCDNNDTIIVRGECGKCSQQAPCPLETKPLRETRKCIYSIYFMGKRSVFIGCQPQCVRTIITRACCAGFFGPQCQACPGRGQNVCSGNGFCLDGVNGTGTCQCGLGFNGTACETCTEGKYGIHCDQACSCVHGRCSQGPLGDGSCDCDVGWRGVKCDMEITTDNCNGTCHTSANCLLDPDGKASCKCAAGFRGNGTVCTAINACETSNGGCSTKADCKRTTPGNRVCVCKAGYTGDGIVCLEINPCLENHGGCDRNAECTQTGPNQAVCNCLPKYTGDGKVCSLINVCLTNNGGCSPFAFCNYTEQDQRICTCKPDYTGDGIVCRGSIYGELPKNPSTSQYFFQLQEHAVRELAGPGPFTVFAPLSSSFNHEPRIKDWDQQGLMSQVLRYHVVGCQQLLLDNLKVTTSATTLQGEPVSISVSQDTVFINNEAKVLSSDIISTNGVIHVIDKLLSPKNLLITPKDALGRVLQNLTTVAANHGYTKFSKLIQDSGLLSVITDSIHTPVTVFWPTDKALEALPPEQQDFLFNQDNKDKLKSYLKFHVIRDSKALASDLPRSASWKTLQGSELSVRCGTGSDIGELFLNEQMCRFIHRGLLFDVGVAYGIDCLLMNPTLGGRCDTFTTFDIPGECGSCIFTPKCPLKSKPKGVKKKCIYNPLPFRRNVEGCQNLCTVVIQTPRCCHGYFMPDCQACPGGPDTPCNNRGMCRDLYTPMGQCLCHTGFNGTACELCWHGRFGPDCQPRSCSEHGQCDEGITGSGECLCETGWTAASCDTPTAVFAVCTPACSVHATCTENNTCVCNLNYEGDGITCTVVDFCKQNNGGCAKVAKCSQKGTQVSCSCKKGYKGDGYSCIEIDPCADGVNGGCHEHATCRMTGPGKHKCECKSHYVGDGVDCEPEQLPLDRCLQDNGQCHPDASCADLYFQDTTVGVFHLRSPLGQYKLTFDKAKEACAKEAATIATYNQLSYAQKAKYHLCSAGWLESGRVAYPTTYASQKCGANVVGIVDYGSRANKSEMWDVFCYRMKDVNCTCKAGYVGDGFSCSGNLLQVLMSFPSLTNFLTEVLAFSKSSARGQAFLKHLTDLSIRGTLFVPQNSGLPGNKSLSGRDIEHHLTNVNVSFYNDLVNGTFLRTMLGSQLLITFSQDQLHQETRFVDGRSILQWDIIAANGILHIISEPLRAPPTAATAAHSGLGTGIFCAVVLVTGAIALAAYSYFRLKQRTTGFQRFDQKRTLMSWLLASSSPRISQTLCMRPQRRHPQSPPVTPSQTLENRIWRTATLWGHCGPDMRSQQATTVTVPR</sequence>
<proteinExistence type="evidence at protein level"/>